<gene>
    <name evidence="1" type="primary">proS</name>
    <name type="ordered locus">PGN_0987</name>
</gene>
<keyword id="KW-0030">Aminoacyl-tRNA synthetase</keyword>
<keyword id="KW-0067">ATP-binding</keyword>
<keyword id="KW-0963">Cytoplasm</keyword>
<keyword id="KW-0436">Ligase</keyword>
<keyword id="KW-0547">Nucleotide-binding</keyword>
<keyword id="KW-0648">Protein biosynthesis</keyword>
<sequence length="493" mass="56143">MAKELKELTPRSESYSQWYQDLVIKADLAENSAVRGCMVIKPYGYAIWEKMQRQLDDMFKETGHVNAYFPLFIPKSFLSREAEHVEGFAKECAVVTHYRLKANPDGDGVVVDPQAKLEEELIVRPTSETIIWNTYKNWIQSHRDLPILCNQWANVVRWEMRTRLFLRTAEFLWQEGHTAHATKEEAEEEARRMLEVYATFAEEYMAMPVVKGVKSANERFAGAVDTYTIEALMQDGKALQSGTSHFLGQNFAKAFNVTFADKDGNRDFVWATSWGVSTRLMGALIMSHSDDNGLVLPPKLAPYQVVIVPIYRNEEQLAQIDEKATQIIQALRAKGISVKYDNSDNKKPGWKFAEYELKGVPVRLAMGARDLENNTIEIARRDTLTKETVGLDGIEETVATLLDDIQKNIFQKALNYRKEHTITVDSYEEFKEKIEDGGFILAHWDGTSETEERIKAETKATIRCIPLNGDMTPGKCMVTGKPSPQRVLFARAY</sequence>
<evidence type="ECO:0000255" key="1">
    <source>
        <dbReference type="HAMAP-Rule" id="MF_01571"/>
    </source>
</evidence>
<reference key="1">
    <citation type="journal article" date="2008" name="DNA Res.">
        <title>Determination of the genome sequence of Porphyromonas gingivalis strain ATCC 33277 and genomic comparison with strain W83 revealed extensive genome rearrangements in P. gingivalis.</title>
        <authorList>
            <person name="Naito M."/>
            <person name="Hirakawa H."/>
            <person name="Yamashita A."/>
            <person name="Ohara N."/>
            <person name="Shoji M."/>
            <person name="Yukitake H."/>
            <person name="Nakayama K."/>
            <person name="Toh H."/>
            <person name="Yoshimura F."/>
            <person name="Kuhara S."/>
            <person name="Hattori M."/>
            <person name="Hayashi T."/>
            <person name="Nakayama K."/>
        </authorList>
    </citation>
    <scope>NUCLEOTIDE SEQUENCE [LARGE SCALE GENOMIC DNA]</scope>
    <source>
        <strain>ATCC 33277 / DSM 20709 / CIP 103683 / JCM 12257 / NCTC 11834 / 2561</strain>
    </source>
</reference>
<accession>B2RJG1</accession>
<protein>
    <recommendedName>
        <fullName evidence="1">Proline--tRNA ligase</fullName>
        <ecNumber evidence="1">6.1.1.15</ecNumber>
    </recommendedName>
    <alternativeName>
        <fullName evidence="1">Prolyl-tRNA synthetase</fullName>
        <shortName evidence="1">ProRS</shortName>
    </alternativeName>
</protein>
<comment type="function">
    <text evidence="1">Catalyzes the attachment of proline to tRNA(Pro) in a two-step reaction: proline is first activated by ATP to form Pro-AMP and then transferred to the acceptor end of tRNA(Pro).</text>
</comment>
<comment type="catalytic activity">
    <reaction evidence="1">
        <text>tRNA(Pro) + L-proline + ATP = L-prolyl-tRNA(Pro) + AMP + diphosphate</text>
        <dbReference type="Rhea" id="RHEA:14305"/>
        <dbReference type="Rhea" id="RHEA-COMP:9700"/>
        <dbReference type="Rhea" id="RHEA-COMP:9702"/>
        <dbReference type="ChEBI" id="CHEBI:30616"/>
        <dbReference type="ChEBI" id="CHEBI:33019"/>
        <dbReference type="ChEBI" id="CHEBI:60039"/>
        <dbReference type="ChEBI" id="CHEBI:78442"/>
        <dbReference type="ChEBI" id="CHEBI:78532"/>
        <dbReference type="ChEBI" id="CHEBI:456215"/>
        <dbReference type="EC" id="6.1.1.15"/>
    </reaction>
</comment>
<comment type="subunit">
    <text evidence="1">Homodimer.</text>
</comment>
<comment type="subcellular location">
    <subcellularLocation>
        <location evidence="1">Cytoplasm</location>
    </subcellularLocation>
</comment>
<comment type="domain">
    <text evidence="1">Consists of three domains: the N-terminal catalytic domain, the anticodon-binding domain and the C-terminal extension.</text>
</comment>
<comment type="similarity">
    <text evidence="1">Belongs to the class-II aminoacyl-tRNA synthetase family. ProS type 3 subfamily.</text>
</comment>
<feature type="chain" id="PRO_1000215571" description="Proline--tRNA ligase">
    <location>
        <begin position="1"/>
        <end position="493"/>
    </location>
</feature>
<proteinExistence type="inferred from homology"/>
<organism>
    <name type="scientific">Porphyromonas gingivalis (strain ATCC 33277 / DSM 20709 / CIP 103683 / JCM 12257 / NCTC 11834 / 2561)</name>
    <dbReference type="NCBI Taxonomy" id="431947"/>
    <lineage>
        <taxon>Bacteria</taxon>
        <taxon>Pseudomonadati</taxon>
        <taxon>Bacteroidota</taxon>
        <taxon>Bacteroidia</taxon>
        <taxon>Bacteroidales</taxon>
        <taxon>Porphyromonadaceae</taxon>
        <taxon>Porphyromonas</taxon>
    </lineage>
</organism>
<dbReference type="EC" id="6.1.1.15" evidence="1"/>
<dbReference type="EMBL" id="AP009380">
    <property type="protein sequence ID" value="BAG33506.1"/>
    <property type="molecule type" value="Genomic_DNA"/>
</dbReference>
<dbReference type="RefSeq" id="WP_004584188.1">
    <property type="nucleotide sequence ID" value="NZ_CP025930.1"/>
</dbReference>
<dbReference type="SMR" id="B2RJG1"/>
<dbReference type="GeneID" id="29256199"/>
<dbReference type="KEGG" id="pgn:PGN_0987"/>
<dbReference type="eggNOG" id="COG0442">
    <property type="taxonomic scope" value="Bacteria"/>
</dbReference>
<dbReference type="HOGENOM" id="CLU_001882_4_2_10"/>
<dbReference type="OrthoDB" id="9809052at2"/>
<dbReference type="BioCyc" id="PGIN431947:G1G2V-1113-MONOMER"/>
<dbReference type="Proteomes" id="UP000008842">
    <property type="component" value="Chromosome"/>
</dbReference>
<dbReference type="GO" id="GO:0017101">
    <property type="term" value="C:aminoacyl-tRNA synthetase multienzyme complex"/>
    <property type="evidence" value="ECO:0007669"/>
    <property type="project" value="TreeGrafter"/>
</dbReference>
<dbReference type="GO" id="GO:0005737">
    <property type="term" value="C:cytoplasm"/>
    <property type="evidence" value="ECO:0007669"/>
    <property type="project" value="UniProtKB-SubCell"/>
</dbReference>
<dbReference type="GO" id="GO:0005524">
    <property type="term" value="F:ATP binding"/>
    <property type="evidence" value="ECO:0007669"/>
    <property type="project" value="UniProtKB-UniRule"/>
</dbReference>
<dbReference type="GO" id="GO:0004827">
    <property type="term" value="F:proline-tRNA ligase activity"/>
    <property type="evidence" value="ECO:0007669"/>
    <property type="project" value="UniProtKB-UniRule"/>
</dbReference>
<dbReference type="GO" id="GO:0006433">
    <property type="term" value="P:prolyl-tRNA aminoacylation"/>
    <property type="evidence" value="ECO:0007669"/>
    <property type="project" value="UniProtKB-UniRule"/>
</dbReference>
<dbReference type="CDD" id="cd00862">
    <property type="entry name" value="ProRS_anticodon_zinc"/>
    <property type="match status" value="1"/>
</dbReference>
<dbReference type="CDD" id="cd00778">
    <property type="entry name" value="ProRS_core_arch_euk"/>
    <property type="match status" value="1"/>
</dbReference>
<dbReference type="FunFam" id="3.40.50.800:FF:000005">
    <property type="entry name" value="bifunctional glutamate/proline--tRNA ligase"/>
    <property type="match status" value="1"/>
</dbReference>
<dbReference type="FunFam" id="3.30.930.10:FF:000023">
    <property type="entry name" value="Proline--tRNA ligase"/>
    <property type="match status" value="1"/>
</dbReference>
<dbReference type="Gene3D" id="3.40.50.800">
    <property type="entry name" value="Anticodon-binding domain"/>
    <property type="match status" value="1"/>
</dbReference>
<dbReference type="Gene3D" id="3.30.930.10">
    <property type="entry name" value="Bira Bifunctional Protein, Domain 2"/>
    <property type="match status" value="1"/>
</dbReference>
<dbReference type="Gene3D" id="3.30.110.30">
    <property type="entry name" value="C-terminal domain of ProRS"/>
    <property type="match status" value="1"/>
</dbReference>
<dbReference type="HAMAP" id="MF_01571">
    <property type="entry name" value="Pro_tRNA_synth_type3"/>
    <property type="match status" value="1"/>
</dbReference>
<dbReference type="InterPro" id="IPR002314">
    <property type="entry name" value="aa-tRNA-synt_IIb"/>
</dbReference>
<dbReference type="InterPro" id="IPR006195">
    <property type="entry name" value="aa-tRNA-synth_II"/>
</dbReference>
<dbReference type="InterPro" id="IPR045864">
    <property type="entry name" value="aa-tRNA-synth_II/BPL/LPL"/>
</dbReference>
<dbReference type="InterPro" id="IPR004154">
    <property type="entry name" value="Anticodon-bd"/>
</dbReference>
<dbReference type="InterPro" id="IPR036621">
    <property type="entry name" value="Anticodon-bd_dom_sf"/>
</dbReference>
<dbReference type="InterPro" id="IPR004499">
    <property type="entry name" value="Pro-tRNA-ligase_IIa_arc-type"/>
</dbReference>
<dbReference type="InterPro" id="IPR016061">
    <property type="entry name" value="Pro-tRNA_ligase_II_C"/>
</dbReference>
<dbReference type="InterPro" id="IPR017449">
    <property type="entry name" value="Pro-tRNA_synth_II"/>
</dbReference>
<dbReference type="InterPro" id="IPR033721">
    <property type="entry name" value="ProRS_core_arch_euk"/>
</dbReference>
<dbReference type="NCBIfam" id="TIGR00408">
    <property type="entry name" value="proS_fam_I"/>
    <property type="match status" value="1"/>
</dbReference>
<dbReference type="PANTHER" id="PTHR43382:SF2">
    <property type="entry name" value="BIFUNCTIONAL GLUTAMATE_PROLINE--TRNA LIGASE"/>
    <property type="match status" value="1"/>
</dbReference>
<dbReference type="PANTHER" id="PTHR43382">
    <property type="entry name" value="PROLYL-TRNA SYNTHETASE"/>
    <property type="match status" value="1"/>
</dbReference>
<dbReference type="Pfam" id="PF03129">
    <property type="entry name" value="HGTP_anticodon"/>
    <property type="match status" value="1"/>
</dbReference>
<dbReference type="Pfam" id="PF09180">
    <property type="entry name" value="ProRS-C_1"/>
    <property type="match status" value="1"/>
</dbReference>
<dbReference type="Pfam" id="PF00587">
    <property type="entry name" value="tRNA-synt_2b"/>
    <property type="match status" value="1"/>
</dbReference>
<dbReference type="SMART" id="SM00946">
    <property type="entry name" value="ProRS-C_1"/>
    <property type="match status" value="1"/>
</dbReference>
<dbReference type="SUPFAM" id="SSF64586">
    <property type="entry name" value="C-terminal domain of ProRS"/>
    <property type="match status" value="1"/>
</dbReference>
<dbReference type="SUPFAM" id="SSF52954">
    <property type="entry name" value="Class II aaRS ABD-related"/>
    <property type="match status" value="1"/>
</dbReference>
<dbReference type="SUPFAM" id="SSF55681">
    <property type="entry name" value="Class II aaRS and biotin synthetases"/>
    <property type="match status" value="1"/>
</dbReference>
<dbReference type="PROSITE" id="PS50862">
    <property type="entry name" value="AA_TRNA_LIGASE_II"/>
    <property type="match status" value="1"/>
</dbReference>
<name>SYP_PORG3</name>